<accession>B6YQ88</accession>
<organism>
    <name type="scientific">Azobacteroides pseudotrichonymphae genomovar. CFP2</name>
    <dbReference type="NCBI Taxonomy" id="511995"/>
    <lineage>
        <taxon>Bacteria</taxon>
        <taxon>Pseudomonadati</taxon>
        <taxon>Bacteroidota</taxon>
        <taxon>Bacteroidia</taxon>
        <taxon>Bacteroidales</taxon>
        <taxon>Candidatus Azobacteroides</taxon>
    </lineage>
</organism>
<keyword id="KW-1185">Reference proteome</keyword>
<keyword id="KW-0687">Ribonucleoprotein</keyword>
<keyword id="KW-0689">Ribosomal protein</keyword>
<keyword id="KW-0694">RNA-binding</keyword>
<keyword id="KW-0699">rRNA-binding</keyword>
<keyword id="KW-0820">tRNA-binding</keyword>
<feature type="chain" id="PRO_1000125891" description="Small ribosomal subunit protein uS7">
    <location>
        <begin position="1"/>
        <end position="158"/>
    </location>
</feature>
<gene>
    <name evidence="1" type="primary">rpsG</name>
    <name type="ordered locus">CFPG_097</name>
</gene>
<protein>
    <recommendedName>
        <fullName evidence="1">Small ribosomal subunit protein uS7</fullName>
    </recommendedName>
    <alternativeName>
        <fullName evidence="2">30S ribosomal protein S7</fullName>
    </alternativeName>
</protein>
<proteinExistence type="inferred from homology"/>
<comment type="function">
    <text evidence="1">One of the primary rRNA binding proteins, it binds directly to 16S rRNA where it nucleates assembly of the head domain of the 30S subunit. Is located at the subunit interface close to the decoding center, probably blocks exit of the E-site tRNA.</text>
</comment>
<comment type="subunit">
    <text evidence="1">Part of the 30S ribosomal subunit. Contacts proteins S9 and S11.</text>
</comment>
<comment type="similarity">
    <text evidence="1">Belongs to the universal ribosomal protein uS7 family.</text>
</comment>
<reference key="1">
    <citation type="journal article" date="2008" name="Science">
        <title>Genome of an endosymbiont coupling N2 fixation to cellulolysis within RT protist cells in termite gut.</title>
        <authorList>
            <person name="Hongoh Y."/>
            <person name="Sharma V.K."/>
            <person name="Prakash T."/>
            <person name="Noda S."/>
            <person name="Toh H."/>
            <person name="Taylor T.D."/>
            <person name="Kudo T."/>
            <person name="Sakaki Y."/>
            <person name="Toyoda A."/>
            <person name="Hattori M."/>
            <person name="Ohkuma M."/>
        </authorList>
    </citation>
    <scope>NUCLEOTIDE SEQUENCE [LARGE SCALE GENOMIC DNA]</scope>
</reference>
<sequence>MRKAKPKKRQILSDAVFGSQRVTKFVNHLMYDGKKSMAFNIFYSALEKVRAKLSDEQKSSLEIWEHALNNITPLVEVKSRRVGGATFQVPTEIYPERKETISMKNMIFFARKRDGKSMADKLSAEIVDAFNSQGGAYKKKEDMRKMAEANRAFAYFRF</sequence>
<name>RS7_AZOPC</name>
<dbReference type="EMBL" id="AP010656">
    <property type="protein sequence ID" value="BAG83360.1"/>
    <property type="molecule type" value="Genomic_DNA"/>
</dbReference>
<dbReference type="RefSeq" id="WP_012573121.1">
    <property type="nucleotide sequence ID" value="NC_011565.1"/>
</dbReference>
<dbReference type="SMR" id="B6YQ88"/>
<dbReference type="STRING" id="511995.CFPG_097"/>
<dbReference type="KEGG" id="aps:CFPG_097"/>
<dbReference type="eggNOG" id="COG0049">
    <property type="taxonomic scope" value="Bacteria"/>
</dbReference>
<dbReference type="HOGENOM" id="CLU_072226_1_1_10"/>
<dbReference type="OrthoDB" id="9807653at2"/>
<dbReference type="Proteomes" id="UP000000723">
    <property type="component" value="Chromosome"/>
</dbReference>
<dbReference type="GO" id="GO:0015935">
    <property type="term" value="C:small ribosomal subunit"/>
    <property type="evidence" value="ECO:0007669"/>
    <property type="project" value="InterPro"/>
</dbReference>
<dbReference type="GO" id="GO:0019843">
    <property type="term" value="F:rRNA binding"/>
    <property type="evidence" value="ECO:0007669"/>
    <property type="project" value="UniProtKB-UniRule"/>
</dbReference>
<dbReference type="GO" id="GO:0003735">
    <property type="term" value="F:structural constituent of ribosome"/>
    <property type="evidence" value="ECO:0007669"/>
    <property type="project" value="InterPro"/>
</dbReference>
<dbReference type="GO" id="GO:0000049">
    <property type="term" value="F:tRNA binding"/>
    <property type="evidence" value="ECO:0007669"/>
    <property type="project" value="UniProtKB-UniRule"/>
</dbReference>
<dbReference type="GO" id="GO:0006412">
    <property type="term" value="P:translation"/>
    <property type="evidence" value="ECO:0007669"/>
    <property type="project" value="UniProtKB-UniRule"/>
</dbReference>
<dbReference type="CDD" id="cd14869">
    <property type="entry name" value="uS7_Bacteria"/>
    <property type="match status" value="1"/>
</dbReference>
<dbReference type="FunFam" id="1.10.455.10:FF:000001">
    <property type="entry name" value="30S ribosomal protein S7"/>
    <property type="match status" value="1"/>
</dbReference>
<dbReference type="Gene3D" id="1.10.455.10">
    <property type="entry name" value="Ribosomal protein S7 domain"/>
    <property type="match status" value="1"/>
</dbReference>
<dbReference type="HAMAP" id="MF_00480_B">
    <property type="entry name" value="Ribosomal_uS7_B"/>
    <property type="match status" value="1"/>
</dbReference>
<dbReference type="InterPro" id="IPR000235">
    <property type="entry name" value="Ribosomal_uS7"/>
</dbReference>
<dbReference type="InterPro" id="IPR005717">
    <property type="entry name" value="Ribosomal_uS7_bac/org-type"/>
</dbReference>
<dbReference type="InterPro" id="IPR023798">
    <property type="entry name" value="Ribosomal_uS7_dom"/>
</dbReference>
<dbReference type="InterPro" id="IPR036823">
    <property type="entry name" value="Ribosomal_uS7_dom_sf"/>
</dbReference>
<dbReference type="NCBIfam" id="TIGR01029">
    <property type="entry name" value="rpsG_bact"/>
    <property type="match status" value="1"/>
</dbReference>
<dbReference type="PANTHER" id="PTHR11205">
    <property type="entry name" value="RIBOSOMAL PROTEIN S7"/>
    <property type="match status" value="1"/>
</dbReference>
<dbReference type="Pfam" id="PF00177">
    <property type="entry name" value="Ribosomal_S7"/>
    <property type="match status" value="1"/>
</dbReference>
<dbReference type="PIRSF" id="PIRSF002122">
    <property type="entry name" value="RPS7p_RPS7a_RPS5e_RPS7o"/>
    <property type="match status" value="1"/>
</dbReference>
<dbReference type="SUPFAM" id="SSF47973">
    <property type="entry name" value="Ribosomal protein S7"/>
    <property type="match status" value="1"/>
</dbReference>
<evidence type="ECO:0000255" key="1">
    <source>
        <dbReference type="HAMAP-Rule" id="MF_00480"/>
    </source>
</evidence>
<evidence type="ECO:0000305" key="2"/>